<proteinExistence type="evidence at protein level"/>
<name>GBRB1_RAT</name>
<organism>
    <name type="scientific">Rattus norvegicus</name>
    <name type="common">Rat</name>
    <dbReference type="NCBI Taxonomy" id="10116"/>
    <lineage>
        <taxon>Eukaryota</taxon>
        <taxon>Metazoa</taxon>
        <taxon>Chordata</taxon>
        <taxon>Craniata</taxon>
        <taxon>Vertebrata</taxon>
        <taxon>Euteleostomi</taxon>
        <taxon>Mammalia</taxon>
        <taxon>Eutheria</taxon>
        <taxon>Euarchontoglires</taxon>
        <taxon>Glires</taxon>
        <taxon>Rodentia</taxon>
        <taxon>Myomorpha</taxon>
        <taxon>Muroidea</taxon>
        <taxon>Muridae</taxon>
        <taxon>Murinae</taxon>
        <taxon>Rattus</taxon>
    </lineage>
</organism>
<evidence type="ECO:0000250" key="1">
    <source>
        <dbReference type="UniProtKB" id="P08220"/>
    </source>
</evidence>
<evidence type="ECO:0000250" key="2">
    <source>
        <dbReference type="UniProtKB" id="P14867"/>
    </source>
</evidence>
<evidence type="ECO:0000250" key="3">
    <source>
        <dbReference type="UniProtKB" id="P28472"/>
    </source>
</evidence>
<evidence type="ECO:0000250" key="4">
    <source>
        <dbReference type="UniProtKB" id="P50571"/>
    </source>
</evidence>
<evidence type="ECO:0000250" key="5">
    <source>
        <dbReference type="UniProtKB" id="P63138"/>
    </source>
</evidence>
<evidence type="ECO:0000255" key="6"/>
<evidence type="ECO:0000269" key="7">
    <source>
    </source>
</evidence>
<evidence type="ECO:0000269" key="8">
    <source>
    </source>
</evidence>
<evidence type="ECO:0000303" key="9">
    <source>
    </source>
</evidence>
<evidence type="ECO:0000305" key="10"/>
<evidence type="ECO:0000312" key="11">
    <source>
        <dbReference type="RGD" id="2649"/>
    </source>
</evidence>
<evidence type="ECO:0007744" key="12">
    <source>
        <dbReference type="PDB" id="6DW0"/>
    </source>
</evidence>
<evidence type="ECO:0007744" key="13">
    <source>
        <dbReference type="PDB" id="6DW1"/>
    </source>
</evidence>
<evidence type="ECO:0007829" key="14">
    <source>
        <dbReference type="PDB" id="6DW1"/>
    </source>
</evidence>
<reference key="1">
    <citation type="journal article" date="1989" name="EMBO J.">
        <title>GABAA receptor beta subunit heterogeneity: functional expression of cloned cDNAs.</title>
        <authorList>
            <person name="Ymer S."/>
            <person name="Schofield P.R."/>
            <person name="Draguhn A."/>
            <person name="Werner P."/>
            <person name="Koehler M."/>
            <person name="Seeburg P.H."/>
        </authorList>
    </citation>
    <scope>NUCLEOTIDE SEQUENCE [MRNA]</scope>
    <source>
        <tissue>Brain</tissue>
    </source>
</reference>
<reference key="2">
    <citation type="journal article" date="1990" name="Brain Res. Mol. Brain Res.">
        <title>GABAA-receptor expressed from rat brain alpha- and beta-subunit cDNAs displays potentiation by benzodiazepine receptor ligands.</title>
        <authorList>
            <person name="Malherbe P."/>
            <person name="Draguhn A."/>
            <person name="Multhaup G."/>
            <person name="Beyreuther K."/>
            <person name="Mohler H."/>
        </authorList>
    </citation>
    <scope>NUCLEOTIDE SEQUENCE [MRNA]</scope>
    <scope>FUNCTION</scope>
    <scope>TRANSPORTER ACTIVITY</scope>
</reference>
<reference evidence="12 13" key="3">
    <citation type="journal article" date="2018" name="Elife">
        <title>Cryo-EM structure of the benzodiazepine-sensitive alpha1beta1gamma2S tri-heteromeric GABAA receptor in complex with GABA.</title>
        <authorList>
            <person name="Phulera S."/>
            <person name="Zhu H."/>
            <person name="Yu J."/>
            <person name="Claxton D.P."/>
            <person name="Yoder N."/>
            <person name="Yoshioka C."/>
            <person name="Gouaux E."/>
        </authorList>
    </citation>
    <scope>STRUCTURE BY ELECTRON MICROSCOPY (3.10 ANGSTROMS) OF 1-333 AND 440-474 IN COMPLEX WITH GABA</scope>
    <scope>FUNCTION</scope>
    <scope>SUBUNIT</scope>
    <scope>INTERACTION WITH GABRA1 AND GABRG2</scope>
    <scope>DISULFIDE BOND</scope>
    <scope>GLYCOSYLATION AT ASN-105 AND ASN-174</scope>
</reference>
<accession>P15431</accession>
<protein>
    <recommendedName>
        <fullName>Gamma-aminobutyric acid receptor subunit beta-1</fullName>
    </recommendedName>
    <alternativeName>
        <fullName evidence="9">GABA(A) receptor subunit beta-1</fullName>
        <shortName evidence="2">GABAAR subunit beta-1</shortName>
    </alternativeName>
</protein>
<dbReference type="EMBL" id="X15466">
    <property type="protein sequence ID" value="CAA33493.1"/>
    <property type="molecule type" value="mRNA"/>
</dbReference>
<dbReference type="PIR" id="S04464">
    <property type="entry name" value="B60039"/>
</dbReference>
<dbReference type="RefSeq" id="NP_037088.1">
    <property type="nucleotide sequence ID" value="NM_012956.2"/>
</dbReference>
<dbReference type="PDB" id="6DW0">
    <property type="method" value="EM"/>
    <property type="resolution" value="3.80 A"/>
    <property type="chains" value="B/E=1-333, B/E=440-474"/>
</dbReference>
<dbReference type="PDB" id="6DW1">
    <property type="method" value="EM"/>
    <property type="resolution" value="3.10 A"/>
    <property type="chains" value="B/E=1-333, B/E=440-474"/>
</dbReference>
<dbReference type="PDBsum" id="6DW0"/>
<dbReference type="PDBsum" id="6DW1"/>
<dbReference type="EMDB" id="EMD-8922"/>
<dbReference type="EMDB" id="EMD-8923"/>
<dbReference type="SMR" id="P15431"/>
<dbReference type="CORUM" id="P15431"/>
<dbReference type="FunCoup" id="P15431">
    <property type="interactions" value="1497"/>
</dbReference>
<dbReference type="IntAct" id="P15431">
    <property type="interactions" value="2"/>
</dbReference>
<dbReference type="STRING" id="10116.ENSRNOP00000003170"/>
<dbReference type="BindingDB" id="P15431"/>
<dbReference type="ChEMBL" id="CHEMBL1907607"/>
<dbReference type="DrugCentral" id="P15431"/>
<dbReference type="TCDB" id="1.A.9.5.1">
    <property type="family name" value="the neurotransmitter receptor, cys loop, ligand-gated ion channel (lic) family"/>
</dbReference>
<dbReference type="GlyCosmos" id="P15431">
    <property type="glycosylation" value="3 sites, No reported glycans"/>
</dbReference>
<dbReference type="GlyGen" id="P15431">
    <property type="glycosylation" value="3 sites"/>
</dbReference>
<dbReference type="iPTMnet" id="P15431"/>
<dbReference type="PhosphoSitePlus" id="P15431"/>
<dbReference type="PaxDb" id="10116-ENSRNOP00000003170"/>
<dbReference type="ABCD" id="P15431">
    <property type="antibodies" value="1 sequenced antibody"/>
</dbReference>
<dbReference type="Ensembl" id="ENSRNOT00000003170.4">
    <property type="protein sequence ID" value="ENSRNOP00000003170.5"/>
    <property type="gene ID" value="ENSRNOG00000002327.4"/>
</dbReference>
<dbReference type="GeneID" id="25450"/>
<dbReference type="KEGG" id="rno:25450"/>
<dbReference type="UCSC" id="RGD:2649">
    <property type="organism name" value="rat"/>
</dbReference>
<dbReference type="AGR" id="RGD:2649"/>
<dbReference type="CTD" id="2560"/>
<dbReference type="RGD" id="2649">
    <property type="gene designation" value="Gabrb1"/>
</dbReference>
<dbReference type="eggNOG" id="KOG3643">
    <property type="taxonomic scope" value="Eukaryota"/>
</dbReference>
<dbReference type="GeneTree" id="ENSGT00940000154245"/>
<dbReference type="HOGENOM" id="CLU_010920_0_2_1"/>
<dbReference type="InParanoid" id="P15431"/>
<dbReference type="OMA" id="DRPIGHK"/>
<dbReference type="OrthoDB" id="8890589at2759"/>
<dbReference type="PhylomeDB" id="P15431"/>
<dbReference type="TreeFam" id="TF315453"/>
<dbReference type="Reactome" id="R-RNO-977443">
    <property type="pathway name" value="GABA receptor activation"/>
</dbReference>
<dbReference type="PRO" id="PR:P15431"/>
<dbReference type="Proteomes" id="UP000002494">
    <property type="component" value="Chromosome 14"/>
</dbReference>
<dbReference type="Bgee" id="ENSRNOG00000002327">
    <property type="expression patterns" value="Expressed in Ammon's horn and 2 other cell types or tissues"/>
</dbReference>
<dbReference type="GO" id="GO:0034707">
    <property type="term" value="C:chloride channel complex"/>
    <property type="evidence" value="ECO:0007669"/>
    <property type="project" value="UniProtKB-KW"/>
</dbReference>
<dbReference type="GO" id="GO:0030425">
    <property type="term" value="C:dendrite"/>
    <property type="evidence" value="ECO:0000314"/>
    <property type="project" value="RGD"/>
</dbReference>
<dbReference type="GO" id="GO:1902711">
    <property type="term" value="C:GABA-A receptor complex"/>
    <property type="evidence" value="ECO:0000315"/>
    <property type="project" value="UniProtKB"/>
</dbReference>
<dbReference type="GO" id="GO:0098982">
    <property type="term" value="C:GABA-ergic synapse"/>
    <property type="evidence" value="ECO:0000314"/>
    <property type="project" value="SynGO"/>
</dbReference>
<dbReference type="GO" id="GO:0005635">
    <property type="term" value="C:nuclear envelope"/>
    <property type="evidence" value="ECO:0000314"/>
    <property type="project" value="RGD"/>
</dbReference>
<dbReference type="GO" id="GO:0005886">
    <property type="term" value="C:plasma membrane"/>
    <property type="evidence" value="ECO:0000315"/>
    <property type="project" value="UniProtKB"/>
</dbReference>
<dbReference type="GO" id="GO:0099634">
    <property type="term" value="C:postsynaptic specialization membrane"/>
    <property type="evidence" value="ECO:0000314"/>
    <property type="project" value="SynGO"/>
</dbReference>
<dbReference type="GO" id="GO:0048787">
    <property type="term" value="C:presynaptic active zone membrane"/>
    <property type="evidence" value="ECO:0000314"/>
    <property type="project" value="SynGO"/>
</dbReference>
<dbReference type="GO" id="GO:0043235">
    <property type="term" value="C:receptor complex"/>
    <property type="evidence" value="ECO:0000314"/>
    <property type="project" value="RGD"/>
</dbReference>
<dbReference type="GO" id="GO:0098685">
    <property type="term" value="C:Schaffer collateral - CA1 synapse"/>
    <property type="evidence" value="ECO:0000266"/>
    <property type="project" value="RGD"/>
</dbReference>
<dbReference type="GO" id="GO:0150047">
    <property type="term" value="F:G protein-coupled neurotransmitter receptor activity involved in regulation of presynaptic membrane potential"/>
    <property type="evidence" value="ECO:0000266"/>
    <property type="project" value="RGD"/>
</dbReference>
<dbReference type="GO" id="GO:0050811">
    <property type="term" value="F:GABA receptor binding"/>
    <property type="evidence" value="ECO:0000353"/>
    <property type="project" value="RGD"/>
</dbReference>
<dbReference type="GO" id="GO:0004890">
    <property type="term" value="F:GABA-A receptor activity"/>
    <property type="evidence" value="ECO:0000314"/>
    <property type="project" value="RGD"/>
</dbReference>
<dbReference type="GO" id="GO:0022851">
    <property type="term" value="F:GABA-gated chloride ion channel activity"/>
    <property type="evidence" value="ECO:0000250"/>
    <property type="project" value="UniProtKB"/>
</dbReference>
<dbReference type="GO" id="GO:0015276">
    <property type="term" value="F:ligand-gated monoatomic ion channel activity"/>
    <property type="evidence" value="ECO:0000315"/>
    <property type="project" value="UniProtKB"/>
</dbReference>
<dbReference type="GO" id="GO:0099507">
    <property type="term" value="F:ligand-gated monoatomic ion channel activity involved in regulation of presynaptic membrane potential"/>
    <property type="evidence" value="ECO:0000266"/>
    <property type="project" value="RGD"/>
</dbReference>
<dbReference type="GO" id="GO:0005253">
    <property type="term" value="F:monoatomic anion channel activity"/>
    <property type="evidence" value="ECO:0000314"/>
    <property type="project" value="RGD"/>
</dbReference>
<dbReference type="GO" id="GO:1904315">
    <property type="term" value="F:transmitter-gated monoatomic ion channel activity involved in regulation of postsynaptic membrane potential"/>
    <property type="evidence" value="ECO:0000314"/>
    <property type="project" value="SynGO"/>
</dbReference>
<dbReference type="GO" id="GO:0071420">
    <property type="term" value="P:cellular response to histamine"/>
    <property type="evidence" value="ECO:0000314"/>
    <property type="project" value="UniProtKB"/>
</dbReference>
<dbReference type="GO" id="GO:0021954">
    <property type="term" value="P:central nervous system neuron development"/>
    <property type="evidence" value="ECO:0000270"/>
    <property type="project" value="RGD"/>
</dbReference>
<dbReference type="GO" id="GO:1902476">
    <property type="term" value="P:chloride transmembrane transport"/>
    <property type="evidence" value="ECO:0000266"/>
    <property type="project" value="RGD"/>
</dbReference>
<dbReference type="GO" id="GO:0006821">
    <property type="term" value="P:chloride transport"/>
    <property type="evidence" value="ECO:0000304"/>
    <property type="project" value="RGD"/>
</dbReference>
<dbReference type="GO" id="GO:0007214">
    <property type="term" value="P:gamma-aminobutyric acid signaling pathway"/>
    <property type="evidence" value="ECO:0000250"/>
    <property type="project" value="UniProtKB"/>
</dbReference>
<dbReference type="GO" id="GO:0006811">
    <property type="term" value="P:monoatomic ion transport"/>
    <property type="evidence" value="ECO:0000315"/>
    <property type="project" value="UniProtKB"/>
</dbReference>
<dbReference type="GO" id="GO:0042698">
    <property type="term" value="P:ovulation cycle"/>
    <property type="evidence" value="ECO:0000270"/>
    <property type="project" value="RGD"/>
</dbReference>
<dbReference type="GO" id="GO:0032570">
    <property type="term" value="P:response to progesterone"/>
    <property type="evidence" value="ECO:0000270"/>
    <property type="project" value="RGD"/>
</dbReference>
<dbReference type="GO" id="GO:0009636">
    <property type="term" value="P:response to toxic substance"/>
    <property type="evidence" value="ECO:0000314"/>
    <property type="project" value="RGD"/>
</dbReference>
<dbReference type="CDD" id="cd18999">
    <property type="entry name" value="LGIC_ECD_GABAAR_B"/>
    <property type="match status" value="1"/>
</dbReference>
<dbReference type="CDD" id="cd19053">
    <property type="entry name" value="LGIC_TM_GABAAR_beta"/>
    <property type="match status" value="1"/>
</dbReference>
<dbReference type="FunFam" id="2.70.170.10:FF:000004">
    <property type="entry name" value="Gamma-aminobutyric acid receptor subunit beta-2 isoform A"/>
    <property type="match status" value="1"/>
</dbReference>
<dbReference type="FunFam" id="1.20.58.390:FF:000067">
    <property type="entry name" value="Glycine receptor subunit alpha-2"/>
    <property type="match status" value="1"/>
</dbReference>
<dbReference type="Gene3D" id="2.70.170.10">
    <property type="entry name" value="Neurotransmitter-gated ion-channel ligand-binding domain"/>
    <property type="match status" value="1"/>
</dbReference>
<dbReference type="Gene3D" id="1.20.58.390">
    <property type="entry name" value="Neurotransmitter-gated ion-channel transmembrane domain"/>
    <property type="match status" value="1"/>
</dbReference>
<dbReference type="InterPro" id="IPR006028">
    <property type="entry name" value="GABAA/Glycine_rcpt"/>
</dbReference>
<dbReference type="InterPro" id="IPR002289">
    <property type="entry name" value="GABAAb_rcpt"/>
</dbReference>
<dbReference type="InterPro" id="IPR006202">
    <property type="entry name" value="Neur_chan_lig-bd"/>
</dbReference>
<dbReference type="InterPro" id="IPR036734">
    <property type="entry name" value="Neur_chan_lig-bd_sf"/>
</dbReference>
<dbReference type="InterPro" id="IPR006201">
    <property type="entry name" value="Neur_channel"/>
</dbReference>
<dbReference type="InterPro" id="IPR036719">
    <property type="entry name" value="Neuro-gated_channel_TM_sf"/>
</dbReference>
<dbReference type="InterPro" id="IPR038050">
    <property type="entry name" value="Neuro_actylchol_rec"/>
</dbReference>
<dbReference type="InterPro" id="IPR006029">
    <property type="entry name" value="Neurotrans-gated_channel_TM"/>
</dbReference>
<dbReference type="InterPro" id="IPR018000">
    <property type="entry name" value="Neurotransmitter_ion_chnl_CS"/>
</dbReference>
<dbReference type="NCBIfam" id="TIGR00860">
    <property type="entry name" value="LIC"/>
    <property type="match status" value="1"/>
</dbReference>
<dbReference type="PANTHER" id="PTHR18945">
    <property type="entry name" value="NEUROTRANSMITTER GATED ION CHANNEL"/>
    <property type="match status" value="1"/>
</dbReference>
<dbReference type="Pfam" id="PF02931">
    <property type="entry name" value="Neur_chan_LBD"/>
    <property type="match status" value="1"/>
</dbReference>
<dbReference type="Pfam" id="PF02932">
    <property type="entry name" value="Neur_chan_memb"/>
    <property type="match status" value="1"/>
</dbReference>
<dbReference type="PRINTS" id="PR01160">
    <property type="entry name" value="GABAARBETA"/>
</dbReference>
<dbReference type="PRINTS" id="PR00253">
    <property type="entry name" value="GABAARECEPTR"/>
</dbReference>
<dbReference type="PRINTS" id="PR00252">
    <property type="entry name" value="NRIONCHANNEL"/>
</dbReference>
<dbReference type="SUPFAM" id="SSF90112">
    <property type="entry name" value="Neurotransmitter-gated ion-channel transmembrane pore"/>
    <property type="match status" value="1"/>
</dbReference>
<dbReference type="SUPFAM" id="SSF63712">
    <property type="entry name" value="Nicotinic receptor ligand binding domain-like"/>
    <property type="match status" value="1"/>
</dbReference>
<dbReference type="PROSITE" id="PS00236">
    <property type="entry name" value="NEUROTR_ION_CHANNEL"/>
    <property type="match status" value="1"/>
</dbReference>
<keyword id="KW-0002">3D-structure</keyword>
<keyword id="KW-1003">Cell membrane</keyword>
<keyword id="KW-0868">Chloride</keyword>
<keyword id="KW-0869">Chloride channel</keyword>
<keyword id="KW-1015">Disulfide bond</keyword>
<keyword id="KW-0325">Glycoprotein</keyword>
<keyword id="KW-0407">Ion channel</keyword>
<keyword id="KW-0406">Ion transport</keyword>
<keyword id="KW-1071">Ligand-gated ion channel</keyword>
<keyword id="KW-0472">Membrane</keyword>
<keyword id="KW-0628">Postsynaptic cell membrane</keyword>
<keyword id="KW-0675">Receptor</keyword>
<keyword id="KW-1185">Reference proteome</keyword>
<keyword id="KW-0732">Signal</keyword>
<keyword id="KW-0770">Synapse</keyword>
<keyword id="KW-0812">Transmembrane</keyword>
<keyword id="KW-1133">Transmembrane helix</keyword>
<keyword id="KW-0813">Transport</keyword>
<sequence>MWTVQNRESLGLLSFPVMVAMVCCAHSSNEPSNMSYVKETVDRLLKGYDIRLRPDFGGPPVDVGMRIDVASIDMVSEVNMDYTLTMYFQQSWKDKRLSYSGIPLNLTLDNRVADQLWVPDTYFLNDKKSFVHGVTVKNRMIRLHPDGTVLYGLRITTTAACMMDLRRYPLDEQNCTLEIESYGYTTDDIEFYWNGGEGAVTGVNKIELPQFSIVDYKMVSKKVEFTTGAYPRLSLSFRLKRNIGYFILQTYMPSTLITILSWVSFWINYDASAARVALGITTVLTMTTISTHLRETLPKIPYVKAIDIYLMGCFVFVFLALLEYAFVNYIFFGKGPQKKGASKQDQSANEKNKLEMNKVQVDAHGNILLSTLEIRNETSGSEVLTGVSDPKATMYSYDSASIQYRKPLSSREGFGRGLDRHGVPGKGRIRRRASQLKVKIPDLTDVNSIDKWSRMFFPITFSLFNVVYWLYYVH</sequence>
<comment type="function">
    <text evidence="3 7 8">Beta subunit of the heteropentameric ligand-gated chloride channel gated by gamma-aminobutyric acid (GABA), a major inhibitory neurotransmitter in the brain (PubMed:1977069). GABA-gated chloride channels, also named GABA(A) receptors (GABAAR), consist of five subunits arranged around a central pore and contain GABA active binding site(s) located at the alpha and beta subunit interface(s) (PubMed:30044221). When activated by GABA, GABAARs selectively allow the flow of chloride anions across the cell membrane down their electrochemical gradient (PubMed:1977069). Chloride influx into the postsynaptic neuron following GABAAR opening decreases the neuron ability to generate a new action potential, thereby reducing nerve transmission (PubMed:1977069). Beta-containing GABAARs can simultaneously bind GABA and histamine where histamine binds at the interface of two neighboring beta subunits, which may be involved in the regulation of sleep and wakefulness (By similarity).</text>
</comment>
<comment type="catalytic activity">
    <reaction evidence="7">
        <text>chloride(in) = chloride(out)</text>
        <dbReference type="Rhea" id="RHEA:29823"/>
        <dbReference type="ChEBI" id="CHEBI:17996"/>
    </reaction>
</comment>
<comment type="activity regulation">
    <text evidence="5">Potentiated by histamine.</text>
</comment>
<comment type="subunit">
    <text evidence="4 8">Heteropentamer, formed by a combination of alpha (GABRA1-6), beta (GABRB1-3), gamma (GABRG1-3), delta (GABRD), epsilon (GABRE), rho (GABRR1-3), pi (GABRP) and theta (GABRQ) chains, each subunit exhibiting distinct physiological and pharmacological properties (PubMed:30044221). Binds UBQLN1 (By similarity).</text>
</comment>
<comment type="subcellular location">
    <subcellularLocation>
        <location evidence="1">Postsynaptic cell membrane</location>
        <topology evidence="1">Multi-pass membrane protein</topology>
    </subcellularLocation>
    <subcellularLocation>
        <location evidence="1">Cell membrane</location>
        <topology evidence="1">Multi-pass membrane protein</topology>
    </subcellularLocation>
</comment>
<comment type="domain">
    <text evidence="8">GABAARs subunits share a common topological structure: a peptide sequence made up of a long extracellular N-terminal, four transmembrane domains, intracellular or cytoplasmic domain located between the third and the fourth transmembrane domains.</text>
</comment>
<comment type="similarity">
    <text evidence="10">Belongs to the ligand-gated ion channel (TC 1.A.9) family. Gamma-aminobutyric acid receptor (TC 1.A.9.5) subfamily. GABRB1 sub-subfamily.</text>
</comment>
<gene>
    <name evidence="11" type="primary">Gabrb1</name>
    <name type="synonym">Gabrb-1</name>
</gene>
<feature type="signal peptide" evidence="6">
    <location>
        <begin position="1"/>
        <end position="25"/>
    </location>
</feature>
<feature type="chain" id="PRO_0000000458" description="Gamma-aminobutyric acid receptor subunit beta-1">
    <location>
        <begin position="26"/>
        <end position="474"/>
    </location>
</feature>
<feature type="topological domain" description="Extracellular" evidence="10">
    <location>
        <begin position="26"/>
        <end position="245"/>
    </location>
</feature>
<feature type="transmembrane region" description="Helical" evidence="10">
    <location>
        <begin position="246"/>
        <end position="267"/>
    </location>
</feature>
<feature type="transmembrane region" description="Helical" evidence="10">
    <location>
        <begin position="271"/>
        <end position="293"/>
    </location>
</feature>
<feature type="transmembrane region" description="Helical" evidence="10">
    <location>
        <begin position="305"/>
        <end position="327"/>
    </location>
</feature>
<feature type="topological domain" description="Cytoplasmic" evidence="10">
    <location>
        <begin position="328"/>
        <end position="451"/>
    </location>
</feature>
<feature type="transmembrane region" description="Helical" evidence="10">
    <location>
        <begin position="452"/>
        <end position="473"/>
    </location>
</feature>
<feature type="binding site" description="in chain B" evidence="3">
    <location>
        <position position="122"/>
    </location>
    <ligand>
        <name>histamine</name>
        <dbReference type="ChEBI" id="CHEBI:58432"/>
        <note>ligand shared between two neighboring beta subunits</note>
    </ligand>
</feature>
<feature type="binding site" description="in chain B" evidence="3">
    <location>
        <begin position="181"/>
        <end position="182"/>
    </location>
    <ligand>
        <name>histamine</name>
        <dbReference type="ChEBI" id="CHEBI:58432"/>
        <note>ligand shared between two neighboring beta subunits</note>
    </ligand>
</feature>
<feature type="binding site" description="in chain A" evidence="8 12 13">
    <location>
        <position position="182"/>
    </location>
    <ligand>
        <name>4-aminobutanoate</name>
        <dbReference type="ChEBI" id="CHEBI:59888"/>
        <note>ligand shared with the neighboring alpha subunit</note>
    </ligand>
</feature>
<feature type="binding site" description="in chain A" evidence="8 12 13">
    <location>
        <position position="227"/>
    </location>
    <ligand>
        <name>4-aminobutanoate</name>
        <dbReference type="ChEBI" id="CHEBI:59888"/>
        <note>ligand shared with the neighboring alpha subunit</note>
    </ligand>
</feature>
<feature type="binding site" description="in chain B" evidence="3">
    <location>
        <position position="227"/>
    </location>
    <ligand>
        <name>histamine</name>
        <dbReference type="ChEBI" id="CHEBI:58432"/>
        <note>ligand shared between two neighboring beta subunits</note>
    </ligand>
</feature>
<feature type="glycosylation site" description="N-linked (GlcNAc...) asparagine" evidence="6">
    <location>
        <position position="33"/>
    </location>
</feature>
<feature type="glycosylation site" description="N-linked (GlcNAc...) asparagine" evidence="8 12 13">
    <location>
        <position position="105"/>
    </location>
</feature>
<feature type="glycosylation site" description="N-linked (GlcNAc...) asparagine" evidence="8 12 13">
    <location>
        <position position="174"/>
    </location>
</feature>
<feature type="disulfide bond" evidence="8 12 13">
    <location>
        <begin position="161"/>
        <end position="175"/>
    </location>
</feature>
<feature type="sequence conflict" description="In Ref. 2; no nucleotide entry." evidence="10" ref="2">
    <original>R</original>
    <variation>Q</variation>
    <location>
        <position position="420"/>
    </location>
</feature>
<feature type="sequence conflict" description="In Ref. 2; no nucleotide entry." evidence="10" ref="2">
    <original>R</original>
    <variation>P</variation>
    <location>
        <position position="428"/>
    </location>
</feature>
<feature type="helix" evidence="14">
    <location>
        <begin position="36"/>
        <end position="44"/>
    </location>
</feature>
<feature type="strand" evidence="14">
    <location>
        <begin position="45"/>
        <end position="47"/>
    </location>
</feature>
<feature type="turn" evidence="14">
    <location>
        <begin position="54"/>
        <end position="57"/>
    </location>
</feature>
<feature type="strand" evidence="14">
    <location>
        <begin position="61"/>
        <end position="71"/>
    </location>
</feature>
<feature type="turn" evidence="14">
    <location>
        <begin position="77"/>
        <end position="80"/>
    </location>
</feature>
<feature type="strand" evidence="14">
    <location>
        <begin position="81"/>
        <end position="93"/>
    </location>
</feature>
<feature type="helix" evidence="14">
    <location>
        <begin position="95"/>
        <end position="97"/>
    </location>
</feature>
<feature type="helix" evidence="14">
    <location>
        <begin position="110"/>
        <end position="112"/>
    </location>
</feature>
<feature type="strand" evidence="14">
    <location>
        <begin position="121"/>
        <end position="123"/>
    </location>
</feature>
<feature type="strand" evidence="14">
    <location>
        <begin position="126"/>
        <end position="131"/>
    </location>
</feature>
<feature type="strand" evidence="14">
    <location>
        <begin position="134"/>
        <end position="136"/>
    </location>
</feature>
<feature type="strand" evidence="14">
    <location>
        <begin position="139"/>
        <end position="142"/>
    </location>
</feature>
<feature type="strand" evidence="14">
    <location>
        <begin position="145"/>
        <end position="160"/>
    </location>
</feature>
<feature type="strand" evidence="14">
    <location>
        <begin position="178"/>
        <end position="183"/>
    </location>
</feature>
<feature type="turn" evidence="14">
    <location>
        <begin position="186"/>
        <end position="188"/>
    </location>
</feature>
<feature type="strand" evidence="14">
    <location>
        <begin position="189"/>
        <end position="193"/>
    </location>
</feature>
<feature type="helix" evidence="14">
    <location>
        <begin position="196"/>
        <end position="199"/>
    </location>
</feature>
<feature type="strand" evidence="14">
    <location>
        <begin position="200"/>
        <end position="203"/>
    </location>
</feature>
<feature type="strand" evidence="14">
    <location>
        <begin position="213"/>
        <end position="224"/>
    </location>
</feature>
<feature type="strand" evidence="14">
    <location>
        <begin position="229"/>
        <end position="239"/>
    </location>
</feature>